<protein>
    <recommendedName>
        <fullName evidence="1">Phosphoglycolate phosphatase</fullName>
        <shortName evidence="1">PGP</shortName>
        <shortName evidence="1">PGPase</shortName>
        <ecNumber evidence="1">3.1.3.18</ecNumber>
    </recommendedName>
</protein>
<proteinExistence type="inferred from homology"/>
<reference key="1">
    <citation type="journal article" date="2009" name="Appl. Environ. Microbiol.">
        <title>Metabolic versatility and indigenous origin of the archaeon Thermococcus sibiricus, isolated from a siberian oil reservoir, as revealed by genome analysis.</title>
        <authorList>
            <person name="Mardanov A.V."/>
            <person name="Ravin N.V."/>
            <person name="Svetlitchnyi V.A."/>
            <person name="Beletsky A.V."/>
            <person name="Miroshnichenko M.L."/>
            <person name="Bonch-Osmolovskaya E.A."/>
            <person name="Skryabin K.G."/>
        </authorList>
    </citation>
    <scope>NUCLEOTIDE SEQUENCE [LARGE SCALE GENOMIC DNA]</scope>
    <source>
        <strain>DSM 12597 / MM 739</strain>
    </source>
</reference>
<dbReference type="EC" id="3.1.3.18" evidence="1"/>
<dbReference type="EMBL" id="CP001463">
    <property type="protein sequence ID" value="ACS89505.1"/>
    <property type="molecule type" value="Genomic_DNA"/>
</dbReference>
<dbReference type="RefSeq" id="WP_015848725.1">
    <property type="nucleotide sequence ID" value="NC_012883.1"/>
</dbReference>
<dbReference type="SMR" id="C6A1L0"/>
<dbReference type="STRING" id="604354.TSIB_0439"/>
<dbReference type="GeneID" id="8095425"/>
<dbReference type="KEGG" id="tsi:TSIB_0439"/>
<dbReference type="eggNOG" id="arCOG01213">
    <property type="taxonomic scope" value="Archaea"/>
</dbReference>
<dbReference type="HOGENOM" id="CLU_044146_2_0_2"/>
<dbReference type="OrthoDB" id="120822at2157"/>
<dbReference type="Proteomes" id="UP000009079">
    <property type="component" value="Chromosome"/>
</dbReference>
<dbReference type="GO" id="GO:0005829">
    <property type="term" value="C:cytosol"/>
    <property type="evidence" value="ECO:0007669"/>
    <property type="project" value="TreeGrafter"/>
</dbReference>
<dbReference type="GO" id="GO:0000287">
    <property type="term" value="F:magnesium ion binding"/>
    <property type="evidence" value="ECO:0007669"/>
    <property type="project" value="InterPro"/>
</dbReference>
<dbReference type="GO" id="GO:0008967">
    <property type="term" value="F:phosphoglycolate phosphatase activity"/>
    <property type="evidence" value="ECO:0007669"/>
    <property type="project" value="UniProtKB-UniRule"/>
</dbReference>
<dbReference type="CDD" id="cd07514">
    <property type="entry name" value="HAD_Pase"/>
    <property type="match status" value="1"/>
</dbReference>
<dbReference type="Gene3D" id="3.90.1070.10">
    <property type="match status" value="1"/>
</dbReference>
<dbReference type="Gene3D" id="3.40.50.1000">
    <property type="entry name" value="HAD superfamily/HAD-like"/>
    <property type="match status" value="1"/>
</dbReference>
<dbReference type="HAMAP" id="MF_01419">
    <property type="entry name" value="GPH_hydrolase_arch"/>
    <property type="match status" value="1"/>
</dbReference>
<dbReference type="InterPro" id="IPR036412">
    <property type="entry name" value="HAD-like_sf"/>
</dbReference>
<dbReference type="InterPro" id="IPR023214">
    <property type="entry name" value="HAD_sf"/>
</dbReference>
<dbReference type="InterPro" id="IPR006382">
    <property type="entry name" value="PGPase"/>
</dbReference>
<dbReference type="NCBIfam" id="TIGR01487">
    <property type="entry name" value="Pglycolate_arch"/>
    <property type="match status" value="1"/>
</dbReference>
<dbReference type="NCBIfam" id="NF002245">
    <property type="entry name" value="PRK01158.1"/>
    <property type="match status" value="1"/>
</dbReference>
<dbReference type="NCBIfam" id="TIGR01482">
    <property type="entry name" value="SPP-subfamily"/>
    <property type="match status" value="1"/>
</dbReference>
<dbReference type="PANTHER" id="PTHR10000:SF8">
    <property type="entry name" value="HAD SUPERFAMILY HYDROLASE-LIKE, TYPE 3"/>
    <property type="match status" value="1"/>
</dbReference>
<dbReference type="PANTHER" id="PTHR10000">
    <property type="entry name" value="PHOSPHOSERINE PHOSPHATASE"/>
    <property type="match status" value="1"/>
</dbReference>
<dbReference type="Pfam" id="PF08282">
    <property type="entry name" value="Hydrolase_3"/>
    <property type="match status" value="2"/>
</dbReference>
<dbReference type="SUPFAM" id="SSF56784">
    <property type="entry name" value="HAD-like"/>
    <property type="match status" value="1"/>
</dbReference>
<name>PGP_THESM</name>
<accession>C6A1L0</accession>
<evidence type="ECO:0000255" key="1">
    <source>
        <dbReference type="HAMAP-Rule" id="MF_01419"/>
    </source>
</evidence>
<keyword id="KW-0119">Carbohydrate metabolism</keyword>
<keyword id="KW-0378">Hydrolase</keyword>
<keyword id="KW-0460">Magnesium</keyword>
<keyword id="KW-0479">Metal-binding</keyword>
<keyword id="KW-1185">Reference proteome</keyword>
<organism>
    <name type="scientific">Thermococcus sibiricus (strain DSM 12597 / MM 739)</name>
    <dbReference type="NCBI Taxonomy" id="604354"/>
    <lineage>
        <taxon>Archaea</taxon>
        <taxon>Methanobacteriati</taxon>
        <taxon>Methanobacteriota</taxon>
        <taxon>Thermococci</taxon>
        <taxon>Thermococcales</taxon>
        <taxon>Thermococcaceae</taxon>
        <taxon>Thermococcus</taxon>
    </lineage>
</organism>
<sequence length="234" mass="25446">MIKAISIDIDGTITYPNRRLQENAVEAIRLAENLGIPVMLVTGNSACFAYAATILIGTTGPFIAEDGGVIGDKSNNRIFLGDMGDSMILWSELKKRYPNAEMSDTMKYGERRAGLVIKRTVPVEVVRGIIEELNLDLIAVDSGYAIHVKQPHVNKGEGIRNACQKLGITPEQVAHIGDGENDLDAFKVVGYRVAVAQAPEVLKREADHVTTKPYGDGGAEGIIHILKKFGYLEI</sequence>
<comment type="function">
    <text evidence="1">Catalyzes the dephosphorylation of 2-phosphoglycolate.</text>
</comment>
<comment type="catalytic activity">
    <reaction evidence="1">
        <text>2-phosphoglycolate + H2O = glycolate + phosphate</text>
        <dbReference type="Rhea" id="RHEA:14369"/>
        <dbReference type="ChEBI" id="CHEBI:15377"/>
        <dbReference type="ChEBI" id="CHEBI:29805"/>
        <dbReference type="ChEBI" id="CHEBI:43474"/>
        <dbReference type="ChEBI" id="CHEBI:58033"/>
        <dbReference type="EC" id="3.1.3.18"/>
    </reaction>
</comment>
<comment type="cofactor">
    <cofactor evidence="1">
        <name>Mg(2+)</name>
        <dbReference type="ChEBI" id="CHEBI:18420"/>
    </cofactor>
</comment>
<comment type="similarity">
    <text evidence="1">Belongs to the archaeal SPP-like hydrolase family.</text>
</comment>
<feature type="chain" id="PRO_1000215253" description="Phosphoglycolate phosphatase">
    <location>
        <begin position="1"/>
        <end position="234"/>
    </location>
</feature>
<feature type="active site" description="Nucleophile" evidence="1">
    <location>
        <position position="8"/>
    </location>
</feature>
<feature type="binding site" evidence="1">
    <location>
        <position position="8"/>
    </location>
    <ligand>
        <name>Mg(2+)</name>
        <dbReference type="ChEBI" id="CHEBI:18420"/>
    </ligand>
</feature>
<feature type="binding site" evidence="1">
    <location>
        <position position="10"/>
    </location>
    <ligand>
        <name>Mg(2+)</name>
        <dbReference type="ChEBI" id="CHEBI:18420"/>
    </ligand>
</feature>
<feature type="binding site" evidence="1">
    <location>
        <position position="155"/>
    </location>
    <ligand>
        <name>substrate</name>
    </ligand>
</feature>
<feature type="binding site" evidence="1">
    <location>
        <position position="178"/>
    </location>
    <ligand>
        <name>Mg(2+)</name>
        <dbReference type="ChEBI" id="CHEBI:18420"/>
    </ligand>
</feature>
<feature type="binding site" evidence="1">
    <location>
        <position position="182"/>
    </location>
    <ligand>
        <name>Mg(2+)</name>
        <dbReference type="ChEBI" id="CHEBI:18420"/>
    </ligand>
</feature>
<gene>
    <name type="ordered locus">TSIB_0439</name>
</gene>